<reference key="1">
    <citation type="journal article" date="2008" name="Proc. Natl. Acad. Sci. U.S.A.">
        <title>The genome of Cyanothece 51142, a unicellular diazotrophic cyanobacterium important in the marine nitrogen cycle.</title>
        <authorList>
            <person name="Welsh E.A."/>
            <person name="Liberton M."/>
            <person name="Stoeckel J."/>
            <person name="Loh T."/>
            <person name="Elvitigala T."/>
            <person name="Wang C."/>
            <person name="Wollam A."/>
            <person name="Fulton R.S."/>
            <person name="Clifton S.W."/>
            <person name="Jacobs J.M."/>
            <person name="Aurora R."/>
            <person name="Ghosh B.K."/>
            <person name="Sherman L.A."/>
            <person name="Smith R.D."/>
            <person name="Wilson R.K."/>
            <person name="Pakrasi H.B."/>
        </authorList>
    </citation>
    <scope>NUCLEOTIDE SEQUENCE [LARGE SCALE GENOMIC DNA]</scope>
    <source>
        <strain>ATCC 51142 / BH68</strain>
    </source>
</reference>
<gene>
    <name type="ordered locus">cce_3668</name>
</gene>
<comment type="cofactor">
    <cofactor evidence="1">
        <name>Fe(2+)</name>
        <dbReference type="ChEBI" id="CHEBI:29033"/>
    </cofactor>
    <text evidence="1">Binds 1 Fe(2+) ion per subunit.</text>
</comment>
<comment type="cofactor">
    <cofactor evidence="1">
        <name>L-ascorbate</name>
        <dbReference type="ChEBI" id="CHEBI:38290"/>
    </cofactor>
</comment>
<protein>
    <recommendedName>
        <fullName evidence="1">PKHD-type hydroxylase cce_3668</fullName>
        <ecNumber evidence="1">1.14.11.-</ecNumber>
    </recommendedName>
</protein>
<feature type="chain" id="PRO_0000346477" description="PKHD-type hydroxylase cce_3668">
    <location>
        <begin position="1"/>
        <end position="222"/>
    </location>
</feature>
<feature type="domain" description="Fe2OG dioxygenase" evidence="1">
    <location>
        <begin position="78"/>
        <end position="175"/>
    </location>
</feature>
<feature type="binding site" evidence="1">
    <location>
        <position position="96"/>
    </location>
    <ligand>
        <name>Fe cation</name>
        <dbReference type="ChEBI" id="CHEBI:24875"/>
    </ligand>
</feature>
<feature type="binding site" evidence="1">
    <location>
        <position position="98"/>
    </location>
    <ligand>
        <name>Fe cation</name>
        <dbReference type="ChEBI" id="CHEBI:24875"/>
    </ligand>
</feature>
<feature type="binding site" evidence="1">
    <location>
        <position position="156"/>
    </location>
    <ligand>
        <name>Fe cation</name>
        <dbReference type="ChEBI" id="CHEBI:24875"/>
    </ligand>
</feature>
<feature type="binding site" evidence="1">
    <location>
        <position position="166"/>
    </location>
    <ligand>
        <name>2-oxoglutarate</name>
        <dbReference type="ChEBI" id="CHEBI:16810"/>
    </ligand>
</feature>
<keyword id="KW-0223">Dioxygenase</keyword>
<keyword id="KW-0408">Iron</keyword>
<keyword id="KW-0479">Metal-binding</keyword>
<keyword id="KW-0560">Oxidoreductase</keyword>
<keyword id="KW-1185">Reference proteome</keyword>
<keyword id="KW-0847">Vitamin C</keyword>
<sequence>MILTIDNILTSEELTELTDILSQGNFVDGQTTAGWHAKLVKQNSQLDKTAPEVKSLEALVINALQRNLLFKLAIHPKHIHSLRFSRYEPKMHYGSHTDNALMGGQQFFRSDVSFTLFLSSPESYEGGELIIEKPEGDLSYKLNPGSIVLYPSTFLHRVETVKTGTRLVVVGWVHSLIRDTAQREILFDIDTVRRSIFAKDGKSVEFDLLAKTHANLLRQWAD</sequence>
<organism>
    <name type="scientific">Crocosphaera subtropica (strain ATCC 51142 / BH68)</name>
    <name type="common">Cyanothece sp. (strain ATCC 51142)</name>
    <dbReference type="NCBI Taxonomy" id="43989"/>
    <lineage>
        <taxon>Bacteria</taxon>
        <taxon>Bacillati</taxon>
        <taxon>Cyanobacteriota</taxon>
        <taxon>Cyanophyceae</taxon>
        <taxon>Oscillatoriophycideae</taxon>
        <taxon>Chroococcales</taxon>
        <taxon>Aphanothecaceae</taxon>
        <taxon>Crocosphaera</taxon>
        <taxon>Crocosphaera subtropica</taxon>
    </lineage>
</organism>
<evidence type="ECO:0000255" key="1">
    <source>
        <dbReference type="HAMAP-Rule" id="MF_00657"/>
    </source>
</evidence>
<proteinExistence type="inferred from homology"/>
<accession>B1X0X7</accession>
<name>Y3668_CROS5</name>
<dbReference type="EC" id="1.14.11.-" evidence="1"/>
<dbReference type="EMBL" id="CP000806">
    <property type="protein sequence ID" value="ACB53016.1"/>
    <property type="molecule type" value="Genomic_DNA"/>
</dbReference>
<dbReference type="RefSeq" id="WP_009545173.1">
    <property type="nucleotide sequence ID" value="NC_010546.1"/>
</dbReference>
<dbReference type="SMR" id="B1X0X7"/>
<dbReference type="STRING" id="43989.cce_3668"/>
<dbReference type="KEGG" id="cyt:cce_3668"/>
<dbReference type="eggNOG" id="COG3128">
    <property type="taxonomic scope" value="Bacteria"/>
</dbReference>
<dbReference type="HOGENOM" id="CLU_106663_0_0_3"/>
<dbReference type="OrthoDB" id="9812472at2"/>
<dbReference type="Proteomes" id="UP000001203">
    <property type="component" value="Chromosome circular"/>
</dbReference>
<dbReference type="GO" id="GO:0016706">
    <property type="term" value="F:2-oxoglutarate-dependent dioxygenase activity"/>
    <property type="evidence" value="ECO:0007669"/>
    <property type="project" value="UniProtKB-UniRule"/>
</dbReference>
<dbReference type="GO" id="GO:0005506">
    <property type="term" value="F:iron ion binding"/>
    <property type="evidence" value="ECO:0007669"/>
    <property type="project" value="UniProtKB-UniRule"/>
</dbReference>
<dbReference type="GO" id="GO:0031418">
    <property type="term" value="F:L-ascorbic acid binding"/>
    <property type="evidence" value="ECO:0007669"/>
    <property type="project" value="UniProtKB-KW"/>
</dbReference>
<dbReference type="GO" id="GO:0006974">
    <property type="term" value="P:DNA damage response"/>
    <property type="evidence" value="ECO:0007669"/>
    <property type="project" value="TreeGrafter"/>
</dbReference>
<dbReference type="GO" id="GO:0006879">
    <property type="term" value="P:intracellular iron ion homeostasis"/>
    <property type="evidence" value="ECO:0007669"/>
    <property type="project" value="TreeGrafter"/>
</dbReference>
<dbReference type="Gene3D" id="2.60.120.620">
    <property type="entry name" value="q2cbj1_9rhob like domain"/>
    <property type="match status" value="1"/>
</dbReference>
<dbReference type="Gene3D" id="4.10.860.20">
    <property type="entry name" value="Rabenosyn, Rab binding domain"/>
    <property type="match status" value="1"/>
</dbReference>
<dbReference type="HAMAP" id="MF_00657">
    <property type="entry name" value="Hydroxyl_YbiX"/>
    <property type="match status" value="1"/>
</dbReference>
<dbReference type="InterPro" id="IPR005123">
    <property type="entry name" value="Oxoglu/Fe-dep_dioxygenase_dom"/>
</dbReference>
<dbReference type="InterPro" id="IPR041097">
    <property type="entry name" value="PKHD_C"/>
</dbReference>
<dbReference type="InterPro" id="IPR023550">
    <property type="entry name" value="PKHD_hydroxylase"/>
</dbReference>
<dbReference type="InterPro" id="IPR006620">
    <property type="entry name" value="Pro_4_hyd_alph"/>
</dbReference>
<dbReference type="InterPro" id="IPR044862">
    <property type="entry name" value="Pro_4_hyd_alph_FE2OG_OXY"/>
</dbReference>
<dbReference type="NCBIfam" id="NF003974">
    <property type="entry name" value="PRK05467.1-3"/>
    <property type="match status" value="1"/>
</dbReference>
<dbReference type="NCBIfam" id="NF003975">
    <property type="entry name" value="PRK05467.1-4"/>
    <property type="match status" value="1"/>
</dbReference>
<dbReference type="PANTHER" id="PTHR41536">
    <property type="entry name" value="PKHD-TYPE HYDROXYLASE YBIX"/>
    <property type="match status" value="1"/>
</dbReference>
<dbReference type="PANTHER" id="PTHR41536:SF1">
    <property type="entry name" value="PKHD-TYPE HYDROXYLASE YBIX"/>
    <property type="match status" value="1"/>
</dbReference>
<dbReference type="Pfam" id="PF13640">
    <property type="entry name" value="2OG-FeII_Oxy_3"/>
    <property type="match status" value="1"/>
</dbReference>
<dbReference type="Pfam" id="PF18331">
    <property type="entry name" value="PKHD_C"/>
    <property type="match status" value="1"/>
</dbReference>
<dbReference type="SMART" id="SM00702">
    <property type="entry name" value="P4Hc"/>
    <property type="match status" value="1"/>
</dbReference>
<dbReference type="PROSITE" id="PS51471">
    <property type="entry name" value="FE2OG_OXY"/>
    <property type="match status" value="1"/>
</dbReference>